<accession>Q7VRI1</accession>
<proteinExistence type="inferred from homology"/>
<sequence length="138" mass="15997">MKSITRRFARLCALQALYAWQLSKNDYTMISNYVIKIQNIQNFNISYFLTLYIGVIHTIKELNTLMIPYLSRGLKAIDYIEYSVLLIALFELTQCCDVPYKVVINEAIELAKIFGSEKSHKFINGVLDKIITEKLYKG</sequence>
<reference key="1">
    <citation type="journal article" date="2003" name="Proc. Natl. Acad. Sci. U.S.A.">
        <title>The genome sequence of Blochmannia floridanus: comparative analysis of reduced genomes.</title>
        <authorList>
            <person name="Gil R."/>
            <person name="Silva F.J."/>
            <person name="Zientz E."/>
            <person name="Delmotte F."/>
            <person name="Gonzalez-Candelas F."/>
            <person name="Latorre A."/>
            <person name="Rausell C."/>
            <person name="Kamerbeek J."/>
            <person name="Gadau J."/>
            <person name="Hoelldobler B."/>
            <person name="van Ham R.C.H.J."/>
            <person name="Gross R."/>
            <person name="Moya A."/>
        </authorList>
    </citation>
    <scope>NUCLEOTIDE SEQUENCE [LARGE SCALE GENOMIC DNA]</scope>
</reference>
<gene>
    <name evidence="1" type="primary">nusB</name>
    <name type="ordered locus">Bfl236</name>
</gene>
<protein>
    <recommendedName>
        <fullName evidence="1">Transcription antitermination protein NusB</fullName>
    </recommendedName>
    <alternativeName>
        <fullName evidence="1">Antitermination factor NusB</fullName>
    </alternativeName>
</protein>
<dbReference type="EMBL" id="BX248583">
    <property type="protein sequence ID" value="CAD83307.1"/>
    <property type="molecule type" value="Genomic_DNA"/>
</dbReference>
<dbReference type="SMR" id="Q7VRI1"/>
<dbReference type="STRING" id="203907.Bfl236"/>
<dbReference type="KEGG" id="bfl:Bfl236"/>
<dbReference type="eggNOG" id="COG0781">
    <property type="taxonomic scope" value="Bacteria"/>
</dbReference>
<dbReference type="HOGENOM" id="CLU_087843_4_1_6"/>
<dbReference type="OrthoDB" id="9789556at2"/>
<dbReference type="Proteomes" id="UP000002192">
    <property type="component" value="Chromosome"/>
</dbReference>
<dbReference type="GO" id="GO:0005829">
    <property type="term" value="C:cytosol"/>
    <property type="evidence" value="ECO:0007669"/>
    <property type="project" value="TreeGrafter"/>
</dbReference>
<dbReference type="GO" id="GO:0003723">
    <property type="term" value="F:RNA binding"/>
    <property type="evidence" value="ECO:0007669"/>
    <property type="project" value="UniProtKB-UniRule"/>
</dbReference>
<dbReference type="GO" id="GO:0006353">
    <property type="term" value="P:DNA-templated transcription termination"/>
    <property type="evidence" value="ECO:0007669"/>
    <property type="project" value="UniProtKB-UniRule"/>
</dbReference>
<dbReference type="GO" id="GO:0031564">
    <property type="term" value="P:transcription antitermination"/>
    <property type="evidence" value="ECO:0007669"/>
    <property type="project" value="UniProtKB-KW"/>
</dbReference>
<dbReference type="Gene3D" id="1.10.940.10">
    <property type="entry name" value="NusB-like"/>
    <property type="match status" value="1"/>
</dbReference>
<dbReference type="HAMAP" id="MF_00073">
    <property type="entry name" value="NusB"/>
    <property type="match status" value="1"/>
</dbReference>
<dbReference type="InterPro" id="IPR035926">
    <property type="entry name" value="NusB-like_sf"/>
</dbReference>
<dbReference type="InterPro" id="IPR011605">
    <property type="entry name" value="NusB_fam"/>
</dbReference>
<dbReference type="InterPro" id="IPR006027">
    <property type="entry name" value="NusB_RsmB_TIM44"/>
</dbReference>
<dbReference type="NCBIfam" id="TIGR01951">
    <property type="entry name" value="nusB"/>
    <property type="match status" value="1"/>
</dbReference>
<dbReference type="PANTHER" id="PTHR11078:SF3">
    <property type="entry name" value="ANTITERMINATION NUSB DOMAIN-CONTAINING PROTEIN"/>
    <property type="match status" value="1"/>
</dbReference>
<dbReference type="PANTHER" id="PTHR11078">
    <property type="entry name" value="N UTILIZATION SUBSTANCE PROTEIN B-RELATED"/>
    <property type="match status" value="1"/>
</dbReference>
<dbReference type="Pfam" id="PF01029">
    <property type="entry name" value="NusB"/>
    <property type="match status" value="1"/>
</dbReference>
<dbReference type="SUPFAM" id="SSF48013">
    <property type="entry name" value="NusB-like"/>
    <property type="match status" value="1"/>
</dbReference>
<organism>
    <name type="scientific">Blochmanniella floridana</name>
    <dbReference type="NCBI Taxonomy" id="203907"/>
    <lineage>
        <taxon>Bacteria</taxon>
        <taxon>Pseudomonadati</taxon>
        <taxon>Pseudomonadota</taxon>
        <taxon>Gammaproteobacteria</taxon>
        <taxon>Enterobacterales</taxon>
        <taxon>Enterobacteriaceae</taxon>
        <taxon>ant endosymbionts</taxon>
        <taxon>Candidatus Blochmanniella</taxon>
    </lineage>
</organism>
<name>NUSB_BLOFL</name>
<comment type="function">
    <text evidence="1">Involved in transcription antitermination. Required for transcription of ribosomal RNA (rRNA) genes. Binds specifically to the boxA antiterminator sequence of the ribosomal RNA (rrn) operons.</text>
</comment>
<comment type="similarity">
    <text evidence="1">Belongs to the NusB family.</text>
</comment>
<feature type="chain" id="PRO_0000176522" description="Transcription antitermination protein NusB">
    <location>
        <begin position="1"/>
        <end position="138"/>
    </location>
</feature>
<keyword id="KW-1185">Reference proteome</keyword>
<keyword id="KW-0694">RNA-binding</keyword>
<keyword id="KW-0804">Transcription</keyword>
<keyword id="KW-0889">Transcription antitermination</keyword>
<keyword id="KW-0805">Transcription regulation</keyword>
<evidence type="ECO:0000255" key="1">
    <source>
        <dbReference type="HAMAP-Rule" id="MF_00073"/>
    </source>
</evidence>